<accession>P60070</accession>
<accession>O05343</accession>
<accession>P95842</accession>
<accession>Q2FWJ2</accession>
<keyword id="KW-0597">Phosphoprotein</keyword>
<keyword id="KW-1185">Reference proteome</keyword>
<protein>
    <recommendedName>
        <fullName>Anti-sigma-B factor antagonist</fullName>
    </recommendedName>
    <alternativeName>
        <fullName>Anti-anti-sigma-B factor</fullName>
    </alternativeName>
</protein>
<comment type="function">
    <text evidence="1">Positive regulator of sigma-B activity. Non-phosphorylated RsbV binds to RsbW, preventing its association with sigma-B. When phosphorylated, releases RsbW, which is then free to complex with and inactivate sigma-B (By similarity).</text>
</comment>
<comment type="PTM">
    <text evidence="1">Phosphorylated by RsbW on a serine residue.</text>
</comment>
<comment type="similarity">
    <text evidence="3">Belongs to the anti-sigma-factor antagonist family.</text>
</comment>
<gene>
    <name type="primary">rsbV</name>
    <name type="ordered locus">SAOUHSC_02300</name>
</gene>
<organism>
    <name type="scientific">Staphylococcus aureus (strain NCTC 8325 / PS 47)</name>
    <dbReference type="NCBI Taxonomy" id="93061"/>
    <lineage>
        <taxon>Bacteria</taxon>
        <taxon>Bacillati</taxon>
        <taxon>Bacillota</taxon>
        <taxon>Bacilli</taxon>
        <taxon>Bacillales</taxon>
        <taxon>Staphylococcaceae</taxon>
        <taxon>Staphylococcus</taxon>
    </lineage>
</organism>
<dbReference type="EMBL" id="Y07645">
    <property type="protein sequence ID" value="CAA68930.1"/>
    <property type="molecule type" value="Genomic_DNA"/>
</dbReference>
<dbReference type="EMBL" id="CP000253">
    <property type="protein sequence ID" value="ABD31334.1"/>
    <property type="molecule type" value="Genomic_DNA"/>
</dbReference>
<dbReference type="RefSeq" id="WP_001052491.1">
    <property type="nucleotide sequence ID" value="NZ_LS483365.1"/>
</dbReference>
<dbReference type="RefSeq" id="YP_500778.1">
    <property type="nucleotide sequence ID" value="NC_007795.1"/>
</dbReference>
<dbReference type="SMR" id="P60070"/>
<dbReference type="STRING" id="93061.SAOUHSC_02300"/>
<dbReference type="PaxDb" id="1280-SAXN108_2311"/>
<dbReference type="GeneID" id="3919171"/>
<dbReference type="KEGG" id="sao:SAOUHSC_02300"/>
<dbReference type="PATRIC" id="fig|93061.5.peg.2084"/>
<dbReference type="eggNOG" id="COG1366">
    <property type="taxonomic scope" value="Bacteria"/>
</dbReference>
<dbReference type="HOGENOM" id="CLU_115403_9_3_9"/>
<dbReference type="OrthoDB" id="9793697at2"/>
<dbReference type="PRO" id="PR:P60070"/>
<dbReference type="Proteomes" id="UP000008816">
    <property type="component" value="Chromosome"/>
</dbReference>
<dbReference type="GO" id="GO:0043856">
    <property type="term" value="F:anti-sigma factor antagonist activity"/>
    <property type="evidence" value="ECO:0000318"/>
    <property type="project" value="GO_Central"/>
</dbReference>
<dbReference type="CDD" id="cd07043">
    <property type="entry name" value="STAS_anti-anti-sigma_factors"/>
    <property type="match status" value="1"/>
</dbReference>
<dbReference type="FunFam" id="3.30.750.24:FF:000001">
    <property type="entry name" value="Anti-sigma factor antagonist"/>
    <property type="match status" value="1"/>
</dbReference>
<dbReference type="Gene3D" id="3.30.750.24">
    <property type="entry name" value="STAS domain"/>
    <property type="match status" value="1"/>
</dbReference>
<dbReference type="InterPro" id="IPR003658">
    <property type="entry name" value="Anti-sigma_ant"/>
</dbReference>
<dbReference type="InterPro" id="IPR002645">
    <property type="entry name" value="STAS_dom"/>
</dbReference>
<dbReference type="InterPro" id="IPR036513">
    <property type="entry name" value="STAS_dom_sf"/>
</dbReference>
<dbReference type="NCBIfam" id="TIGR00377">
    <property type="entry name" value="ant_ant_sig"/>
    <property type="match status" value="1"/>
</dbReference>
<dbReference type="PANTHER" id="PTHR33495">
    <property type="entry name" value="ANTI-SIGMA FACTOR ANTAGONIST TM_1081-RELATED-RELATED"/>
    <property type="match status" value="1"/>
</dbReference>
<dbReference type="PANTHER" id="PTHR33495:SF9">
    <property type="entry name" value="ANTI-SIGMA-B FACTOR ANTAGONIST"/>
    <property type="match status" value="1"/>
</dbReference>
<dbReference type="Pfam" id="PF01740">
    <property type="entry name" value="STAS"/>
    <property type="match status" value="1"/>
</dbReference>
<dbReference type="SUPFAM" id="SSF52091">
    <property type="entry name" value="SpoIIaa-like"/>
    <property type="match status" value="1"/>
</dbReference>
<dbReference type="PROSITE" id="PS50801">
    <property type="entry name" value="STAS"/>
    <property type="match status" value="1"/>
</dbReference>
<reference key="1">
    <citation type="journal article" date="1997" name="Arch. Microbiol.">
        <title>The alternative sigma factor sigmaB in Staphylococcus aureus: regulation of the sigB operon in response to growth phase and heat shock.</title>
        <authorList>
            <person name="Kullik I."/>
            <person name="Giachino P."/>
        </authorList>
    </citation>
    <scope>NUCLEOTIDE SEQUENCE [GENOMIC DNA]</scope>
</reference>
<reference key="2">
    <citation type="book" date="2006" name="Gram positive pathogens, 2nd edition">
        <title>The Staphylococcus aureus NCTC 8325 genome.</title>
        <editorList>
            <person name="Fischetti V."/>
            <person name="Novick R."/>
            <person name="Ferretti J."/>
            <person name="Portnoy D."/>
            <person name="Rood J."/>
        </editorList>
        <authorList>
            <person name="Gillaspy A.F."/>
            <person name="Worrell V."/>
            <person name="Orvis J."/>
            <person name="Roe B.A."/>
            <person name="Dyer D.W."/>
            <person name="Iandolo J.J."/>
        </authorList>
    </citation>
    <scope>NUCLEOTIDE SEQUENCE [LARGE SCALE GENOMIC DNA]</scope>
    <source>
        <strain>NCTC 8325 / PS 47</strain>
    </source>
</reference>
<proteinExistence type="inferred from homology"/>
<sequence length="108" mass="12205">MNLNIETTTQDKFYEVKVGGELDVYTVPELEEVLTPMRQDGTRDIYVNLENVSYMDSTGLGLFVGTLKALNQNDKELYILGVSDRIGRLFEITGLKDLMHVNEGTEVE</sequence>
<evidence type="ECO:0000250" key="1"/>
<evidence type="ECO:0000255" key="2">
    <source>
        <dbReference type="PROSITE-ProRule" id="PRU00198"/>
    </source>
</evidence>
<evidence type="ECO:0000305" key="3"/>
<feature type="chain" id="PRO_0000194194" description="Anti-sigma-B factor antagonist">
    <location>
        <begin position="1"/>
        <end position="108"/>
    </location>
</feature>
<feature type="domain" description="STAS" evidence="2">
    <location>
        <begin position="3"/>
        <end position="108"/>
    </location>
</feature>
<feature type="modified residue" description="Phosphoserine" evidence="1">
    <location>
        <position position="57"/>
    </location>
</feature>
<name>RSBV_STAA8</name>